<keyword id="KW-0378">Hydrolase</keyword>
<evidence type="ECO:0000255" key="1">
    <source>
        <dbReference type="HAMAP-Rule" id="MF_00457"/>
    </source>
</evidence>
<accession>A0M3T2</accession>
<comment type="similarity">
    <text evidence="1">Belongs to the UPF0173 family.</text>
</comment>
<name>Y2312_CHRFK</name>
<organism>
    <name type="scientific">Christiangramia forsetii (strain DSM 17595 / CGMCC 1.15422 / KT0803)</name>
    <name type="common">Gramella forsetii</name>
    <dbReference type="NCBI Taxonomy" id="411154"/>
    <lineage>
        <taxon>Bacteria</taxon>
        <taxon>Pseudomonadati</taxon>
        <taxon>Bacteroidota</taxon>
        <taxon>Flavobacteriia</taxon>
        <taxon>Flavobacteriales</taxon>
        <taxon>Flavobacteriaceae</taxon>
        <taxon>Christiangramia</taxon>
    </lineage>
</organism>
<gene>
    <name type="ordered locus">GFO_2312</name>
</gene>
<protein>
    <recommendedName>
        <fullName evidence="1">UPF0173 metal-dependent hydrolase GFO_2312</fullName>
    </recommendedName>
</protein>
<proteinExistence type="inferred from homology"/>
<reference key="1">
    <citation type="journal article" date="2006" name="Environ. Microbiol.">
        <title>Whole genome analysis of the marine Bacteroidetes'Gramella forsetii' reveals adaptations to degradation of polymeric organic matter.</title>
        <authorList>
            <person name="Bauer M."/>
            <person name="Kube M."/>
            <person name="Teeling H."/>
            <person name="Richter M."/>
            <person name="Lombardot T."/>
            <person name="Allers E."/>
            <person name="Wuerdemann C.A."/>
            <person name="Quast C."/>
            <person name="Kuhl H."/>
            <person name="Knaust F."/>
            <person name="Woebken D."/>
            <person name="Bischof K."/>
            <person name="Mussmann M."/>
            <person name="Choudhuri J.V."/>
            <person name="Meyer F."/>
            <person name="Reinhardt R."/>
            <person name="Amann R.I."/>
            <person name="Gloeckner F.O."/>
        </authorList>
    </citation>
    <scope>NUCLEOTIDE SEQUENCE [LARGE SCALE GENOMIC DNA]</scope>
    <source>
        <strain>DSM 17595 / CGMCC 1.15422 / KT0803</strain>
    </source>
</reference>
<feature type="chain" id="PRO_0000367183" description="UPF0173 metal-dependent hydrolase GFO_2312">
    <location>
        <begin position="1"/>
        <end position="226"/>
    </location>
</feature>
<dbReference type="EMBL" id="CU207366">
    <property type="protein sequence ID" value="CAL67277.1"/>
    <property type="molecule type" value="Genomic_DNA"/>
</dbReference>
<dbReference type="RefSeq" id="WP_011710180.1">
    <property type="nucleotide sequence ID" value="NC_008571.1"/>
</dbReference>
<dbReference type="SMR" id="A0M3T2"/>
<dbReference type="STRING" id="411154.GFO_2312"/>
<dbReference type="KEGG" id="gfo:GFO_2312"/>
<dbReference type="eggNOG" id="COG2220">
    <property type="taxonomic scope" value="Bacteria"/>
</dbReference>
<dbReference type="HOGENOM" id="CLU_070010_4_1_10"/>
<dbReference type="OrthoDB" id="9789133at2"/>
<dbReference type="Proteomes" id="UP000000755">
    <property type="component" value="Chromosome"/>
</dbReference>
<dbReference type="GO" id="GO:0016787">
    <property type="term" value="F:hydrolase activity"/>
    <property type="evidence" value="ECO:0007669"/>
    <property type="project" value="UniProtKB-UniRule"/>
</dbReference>
<dbReference type="Gene3D" id="3.60.15.10">
    <property type="entry name" value="Ribonuclease Z/Hydroxyacylglutathione hydrolase-like"/>
    <property type="match status" value="1"/>
</dbReference>
<dbReference type="HAMAP" id="MF_00457">
    <property type="entry name" value="UPF0173"/>
    <property type="match status" value="1"/>
</dbReference>
<dbReference type="InterPro" id="IPR001279">
    <property type="entry name" value="Metallo-B-lactamas"/>
</dbReference>
<dbReference type="InterPro" id="IPR036866">
    <property type="entry name" value="RibonucZ/Hydroxyglut_hydro"/>
</dbReference>
<dbReference type="InterPro" id="IPR022877">
    <property type="entry name" value="UPF0173"/>
</dbReference>
<dbReference type="InterPro" id="IPR050114">
    <property type="entry name" value="UPF0173_UPF0282_UlaG_hydrolase"/>
</dbReference>
<dbReference type="NCBIfam" id="NF001911">
    <property type="entry name" value="PRK00685.1"/>
    <property type="match status" value="1"/>
</dbReference>
<dbReference type="PANTHER" id="PTHR43546:SF3">
    <property type="entry name" value="UPF0173 METAL-DEPENDENT HYDROLASE MJ1163"/>
    <property type="match status" value="1"/>
</dbReference>
<dbReference type="PANTHER" id="PTHR43546">
    <property type="entry name" value="UPF0173 METAL-DEPENDENT HYDROLASE MJ1163-RELATED"/>
    <property type="match status" value="1"/>
</dbReference>
<dbReference type="Pfam" id="PF12706">
    <property type="entry name" value="Lactamase_B_2"/>
    <property type="match status" value="1"/>
</dbReference>
<dbReference type="SMART" id="SM00849">
    <property type="entry name" value="Lactamase_B"/>
    <property type="match status" value="1"/>
</dbReference>
<dbReference type="SUPFAM" id="SSF56281">
    <property type="entry name" value="Metallo-hydrolase/oxidoreductase"/>
    <property type="match status" value="1"/>
</dbReference>
<sequence>MKITFYGQNTLALKIGDIHVLVDPFITGNDLSKDKVDINDLKADYILLTHAHQDHILDAEAIAKNTGAVIVSNFEIANHYEEKGFEVHPMNHGGSWDFEFGKVKYVNAIHTSSFPDGSYGGQPGGFVIEGEHKNIYIAGDTALTMDMKLIPMHTKLDIAVLPIGDNFTMGINDAIIASDFIECDKIIGCHYDTFGYIEIDHEEAKKKFYEKGKDLMLLDIGESIEL</sequence>